<keyword id="KW-0002">3D-structure</keyword>
<keyword id="KW-1185">Reference proteome</keyword>
<keyword id="KW-0687">Ribonucleoprotein</keyword>
<keyword id="KW-0689">Ribosomal protein</keyword>
<accession>P48166</accession>
<reference key="1">
    <citation type="journal article" date="1998" name="Science">
        <title>Genome sequence of the nematode C. elegans: a platform for investigating biology.</title>
        <authorList>
            <consortium name="The C. elegans sequencing consortium"/>
        </authorList>
    </citation>
    <scope>NUCLEOTIDE SEQUENCE [LARGE SCALE GENOMIC DNA]</scope>
    <source>
        <strain>Bristol N2</strain>
    </source>
</reference>
<reference key="2">
    <citation type="submission" date="2000-09" db="EMBL/GenBank/DDBJ databases">
        <title>The Caenorhabditis elegans transcriptome project, a complementary view of the genome.</title>
        <authorList>
            <person name="Kohara Y."/>
            <person name="Shin-i T."/>
            <person name="Suzuki Y."/>
            <person name="Sugano S."/>
            <person name="Potdevin M."/>
            <person name="Thierry-Mieg Y."/>
            <person name="Thierry-Mieg D."/>
            <person name="Thierry-Mieg J."/>
        </authorList>
    </citation>
    <scope>NUCLEOTIDE SEQUENCE [LARGE SCALE MRNA]</scope>
    <source>
        <strain>Bristol N2</strain>
    </source>
</reference>
<evidence type="ECO:0000250" key="1"/>
<evidence type="ECO:0000256" key="2">
    <source>
        <dbReference type="SAM" id="MobiDB-lite"/>
    </source>
</evidence>
<evidence type="ECO:0000305" key="3"/>
<evidence type="ECO:0000312" key="4">
    <source>
        <dbReference type="WormBase" id="C09H10.2"/>
    </source>
</evidence>
<organism>
    <name type="scientific">Caenorhabditis elegans</name>
    <dbReference type="NCBI Taxonomy" id="6239"/>
    <lineage>
        <taxon>Eukaryota</taxon>
        <taxon>Metazoa</taxon>
        <taxon>Ecdysozoa</taxon>
        <taxon>Nematoda</taxon>
        <taxon>Chromadorea</taxon>
        <taxon>Rhabditida</taxon>
        <taxon>Rhabditina</taxon>
        <taxon>Rhabditomorpha</taxon>
        <taxon>Rhabditoidea</taxon>
        <taxon>Rhabditidae</taxon>
        <taxon>Peloderinae</taxon>
        <taxon>Caenorhabditis</taxon>
    </lineage>
</organism>
<protein>
    <recommendedName>
        <fullName evidence="3">Large ribosomal subunit protein eL42</fullName>
    </recommendedName>
    <alternativeName>
        <fullName>60S ribosomal protein L44</fullName>
    </alternativeName>
    <alternativeName>
        <fullName>L41</fullName>
    </alternativeName>
    <alternativeName>
        <fullName evidence="3">Ribosomal protein rpl-36.A</fullName>
    </alternativeName>
</protein>
<comment type="similarity">
    <text evidence="3">Belongs to the eukaryotic ribosomal protein eL42 family.</text>
</comment>
<name>RL36A_CAEEL</name>
<dbReference type="EMBL" id="Z50109">
    <property type="protein sequence ID" value="CAA90434.1"/>
    <property type="molecule type" value="Genomic_DNA"/>
</dbReference>
<dbReference type="EMBL" id="AF304121">
    <property type="protein sequence ID" value="AAG50234.1"/>
    <property type="molecule type" value="mRNA"/>
</dbReference>
<dbReference type="PIR" id="T19159">
    <property type="entry name" value="T19159"/>
</dbReference>
<dbReference type="RefSeq" id="NP_496375.1">
    <property type="nucleotide sequence ID" value="NM_063974.8"/>
</dbReference>
<dbReference type="PDB" id="9BH5">
    <property type="method" value="EM"/>
    <property type="resolution" value="2.63 A"/>
    <property type="chains" value="Co=1-105"/>
</dbReference>
<dbReference type="PDB" id="9CAI">
    <property type="method" value="EM"/>
    <property type="resolution" value="2.59 A"/>
    <property type="chains" value="Co=1-105"/>
</dbReference>
<dbReference type="PDBsum" id="9BH5"/>
<dbReference type="PDBsum" id="9CAI"/>
<dbReference type="EMDB" id="EMD-44533"/>
<dbReference type="EMDB" id="EMD-45392"/>
<dbReference type="SMR" id="P48166"/>
<dbReference type="BioGRID" id="40005">
    <property type="interactions" value="85"/>
</dbReference>
<dbReference type="FunCoup" id="P48166">
    <property type="interactions" value="1811"/>
</dbReference>
<dbReference type="IntAct" id="P48166">
    <property type="interactions" value="1"/>
</dbReference>
<dbReference type="STRING" id="6239.C09H10.2.1"/>
<dbReference type="PaxDb" id="6239-C09H10.2"/>
<dbReference type="PeptideAtlas" id="P48166"/>
<dbReference type="EnsemblMetazoa" id="C09H10.2.1">
    <property type="protein sequence ID" value="C09H10.2.1"/>
    <property type="gene ID" value="WBGene00004454"/>
</dbReference>
<dbReference type="EnsemblMetazoa" id="C09H10.2.2">
    <property type="protein sequence ID" value="C09H10.2.2"/>
    <property type="gene ID" value="WBGene00004454"/>
</dbReference>
<dbReference type="GeneID" id="174695"/>
<dbReference type="KEGG" id="cel:CELE_C09H10.2"/>
<dbReference type="UCSC" id="C09H10.2.3">
    <property type="organism name" value="c. elegans"/>
</dbReference>
<dbReference type="AGR" id="WB:WBGene00004454"/>
<dbReference type="CTD" id="174695"/>
<dbReference type="WormBase" id="C09H10.2">
    <property type="protein sequence ID" value="CE02131"/>
    <property type="gene ID" value="WBGene00004454"/>
    <property type="gene designation" value="rpl-36A"/>
</dbReference>
<dbReference type="eggNOG" id="KOG3464">
    <property type="taxonomic scope" value="Eukaryota"/>
</dbReference>
<dbReference type="GeneTree" id="ENSGT00940000165687"/>
<dbReference type="HOGENOM" id="CLU_114645_2_1_1"/>
<dbReference type="InParanoid" id="P48166"/>
<dbReference type="OMA" id="CKKHTIH"/>
<dbReference type="OrthoDB" id="2967263at2759"/>
<dbReference type="PhylomeDB" id="P48166"/>
<dbReference type="Reactome" id="R-CEL-156827">
    <property type="pathway name" value="L13a-mediated translational silencing of Ceruloplasmin expression"/>
</dbReference>
<dbReference type="Reactome" id="R-CEL-1799339">
    <property type="pathway name" value="SRP-dependent cotranslational protein targeting to membrane"/>
</dbReference>
<dbReference type="Reactome" id="R-CEL-72689">
    <property type="pathway name" value="Formation of a pool of free 40S subunits"/>
</dbReference>
<dbReference type="Reactome" id="R-CEL-72706">
    <property type="pathway name" value="GTP hydrolysis and joining of the 60S ribosomal subunit"/>
</dbReference>
<dbReference type="Reactome" id="R-CEL-975956">
    <property type="pathway name" value="Nonsense Mediated Decay (NMD) independent of the Exon Junction Complex (EJC)"/>
</dbReference>
<dbReference type="Reactome" id="R-CEL-975957">
    <property type="pathway name" value="Nonsense Mediated Decay (NMD) enhanced by the Exon Junction Complex (EJC)"/>
</dbReference>
<dbReference type="PRO" id="PR:P48166"/>
<dbReference type="Proteomes" id="UP000001940">
    <property type="component" value="Chromosome II"/>
</dbReference>
<dbReference type="Bgee" id="WBGene00004454">
    <property type="expression patterns" value="Expressed in larva and 3 other cell types or tissues"/>
</dbReference>
<dbReference type="GO" id="GO:0022625">
    <property type="term" value="C:cytosolic large ribosomal subunit"/>
    <property type="evidence" value="ECO:0000318"/>
    <property type="project" value="GO_Central"/>
</dbReference>
<dbReference type="GO" id="GO:0003735">
    <property type="term" value="F:structural constituent of ribosome"/>
    <property type="evidence" value="ECO:0007669"/>
    <property type="project" value="InterPro"/>
</dbReference>
<dbReference type="GO" id="GO:0006412">
    <property type="term" value="P:translation"/>
    <property type="evidence" value="ECO:0007669"/>
    <property type="project" value="InterPro"/>
</dbReference>
<dbReference type="FunFam" id="3.10.450.80:FF:000001">
    <property type="entry name" value="60S ribosomal protein L44"/>
    <property type="match status" value="1"/>
</dbReference>
<dbReference type="Gene3D" id="3.10.450.80">
    <property type="match status" value="1"/>
</dbReference>
<dbReference type="InterPro" id="IPR000552">
    <property type="entry name" value="Ribosomal_eL44"/>
</dbReference>
<dbReference type="InterPro" id="IPR053708">
    <property type="entry name" value="Ribosomal_LSU_eL42"/>
</dbReference>
<dbReference type="InterPro" id="IPR011332">
    <property type="entry name" value="Ribosomal_zn-bd"/>
</dbReference>
<dbReference type="PANTHER" id="PTHR10369">
    <property type="entry name" value="60S RIBOSOMAL PROTEIN L36A/L44"/>
    <property type="match status" value="1"/>
</dbReference>
<dbReference type="Pfam" id="PF00935">
    <property type="entry name" value="Ribosomal_L44"/>
    <property type="match status" value="1"/>
</dbReference>
<dbReference type="SUPFAM" id="SSF57829">
    <property type="entry name" value="Zn-binding ribosomal proteins"/>
    <property type="match status" value="1"/>
</dbReference>
<dbReference type="PROSITE" id="PS01172">
    <property type="entry name" value="RIBOSOMAL_L44E"/>
    <property type="match status" value="1"/>
</dbReference>
<feature type="initiator methionine" description="Removed" evidence="1">
    <location>
        <position position="1"/>
    </location>
</feature>
<feature type="chain" id="PRO_0000149127" description="Large ribosomal subunit protein eL42" evidence="3">
    <location>
        <begin position="2"/>
        <end position="105"/>
    </location>
</feature>
<feature type="region of interest" description="Disordered" evidence="2">
    <location>
        <begin position="23"/>
        <end position="61"/>
    </location>
</feature>
<gene>
    <name evidence="4" type="primary">rpl-36A</name>
    <name evidence="4" type="synonym">rpl-41</name>
    <name evidence="4" type="ORF">C09H10.2</name>
</gene>
<sequence length="105" mass="12367">MVNVPKARRTFCDGKCRKHTNHKVTQYKKGKESKFAQGRRRYDRKQSGFGGQTKPIFRKKAKTTKKIVLRMECTECKHKKQLPIKRCKHFELGGQKKSRGQVIQF</sequence>
<proteinExistence type="evidence at protein level"/>